<sequence length="109" mass="12729">MEMDLNNRLTEDETLEQAYDIFLELAADNLDPADIILFNLQFEERGGAELFDPAEDWQEHVDFDLNPDFFAEVVIGLADTEDGEINDIFARVLLCREKDHKLCHILWRE</sequence>
<gene>
    <name evidence="1" type="primary">yciU</name>
    <name type="ordered locus">STY1311</name>
    <name type="ordered locus">t1652</name>
</gene>
<comment type="function">
    <text evidence="1">May act as a double-stranded DNA (dsDNA) mimic. Probably regulates the activity of a dsDNA-binding protein.</text>
</comment>
<comment type="similarity">
    <text evidence="1">Belongs to the putative dsDNA mimic protein family.</text>
</comment>
<organism>
    <name type="scientific">Salmonella typhi</name>
    <dbReference type="NCBI Taxonomy" id="90370"/>
    <lineage>
        <taxon>Bacteria</taxon>
        <taxon>Pseudomonadati</taxon>
        <taxon>Pseudomonadota</taxon>
        <taxon>Gammaproteobacteria</taxon>
        <taxon>Enterobacterales</taxon>
        <taxon>Enterobacteriaceae</taxon>
        <taxon>Salmonella</taxon>
    </lineage>
</organism>
<reference key="1">
    <citation type="journal article" date="2001" name="Nature">
        <title>Complete genome sequence of a multiple drug resistant Salmonella enterica serovar Typhi CT18.</title>
        <authorList>
            <person name="Parkhill J."/>
            <person name="Dougan G."/>
            <person name="James K.D."/>
            <person name="Thomson N.R."/>
            <person name="Pickard D."/>
            <person name="Wain J."/>
            <person name="Churcher C.M."/>
            <person name="Mungall K.L."/>
            <person name="Bentley S.D."/>
            <person name="Holden M.T.G."/>
            <person name="Sebaihia M."/>
            <person name="Baker S."/>
            <person name="Basham D."/>
            <person name="Brooks K."/>
            <person name="Chillingworth T."/>
            <person name="Connerton P."/>
            <person name="Cronin A."/>
            <person name="Davis P."/>
            <person name="Davies R.M."/>
            <person name="Dowd L."/>
            <person name="White N."/>
            <person name="Farrar J."/>
            <person name="Feltwell T."/>
            <person name="Hamlin N."/>
            <person name="Haque A."/>
            <person name="Hien T.T."/>
            <person name="Holroyd S."/>
            <person name="Jagels K."/>
            <person name="Krogh A."/>
            <person name="Larsen T.S."/>
            <person name="Leather S."/>
            <person name="Moule S."/>
            <person name="O'Gaora P."/>
            <person name="Parry C."/>
            <person name="Quail M.A."/>
            <person name="Rutherford K.M."/>
            <person name="Simmonds M."/>
            <person name="Skelton J."/>
            <person name="Stevens K."/>
            <person name="Whitehead S."/>
            <person name="Barrell B.G."/>
        </authorList>
    </citation>
    <scope>NUCLEOTIDE SEQUENCE [LARGE SCALE GENOMIC DNA]</scope>
    <source>
        <strain>CT18</strain>
    </source>
</reference>
<reference key="2">
    <citation type="journal article" date="2003" name="J. Bacteriol.">
        <title>Comparative genomics of Salmonella enterica serovar Typhi strains Ty2 and CT18.</title>
        <authorList>
            <person name="Deng W."/>
            <person name="Liou S.-R."/>
            <person name="Plunkett G. III"/>
            <person name="Mayhew G.F."/>
            <person name="Rose D.J."/>
            <person name="Burland V."/>
            <person name="Kodoyianni V."/>
            <person name="Schwartz D.C."/>
            <person name="Blattner F.R."/>
        </authorList>
    </citation>
    <scope>NUCLEOTIDE SEQUENCE [LARGE SCALE GENOMIC DNA]</scope>
    <source>
        <strain>ATCC 700931 / Ty2</strain>
    </source>
</reference>
<proteinExistence type="inferred from homology"/>
<evidence type="ECO:0000255" key="1">
    <source>
        <dbReference type="HAMAP-Rule" id="MF_00680"/>
    </source>
</evidence>
<dbReference type="EMBL" id="AL513382">
    <property type="protein sequence ID" value="CAD08392.1"/>
    <property type="molecule type" value="Genomic_DNA"/>
</dbReference>
<dbReference type="EMBL" id="AE014613">
    <property type="protein sequence ID" value="AAO69279.1"/>
    <property type="molecule type" value="Genomic_DNA"/>
</dbReference>
<dbReference type="RefSeq" id="NP_455758.1">
    <property type="nucleotide sequence ID" value="NC_003198.1"/>
</dbReference>
<dbReference type="RefSeq" id="WP_000425070.1">
    <property type="nucleotide sequence ID" value="NZ_WSUR01000006.1"/>
</dbReference>
<dbReference type="SMR" id="Q8Z7E5"/>
<dbReference type="STRING" id="220341.gene:17585272"/>
<dbReference type="KEGG" id="stt:t1652"/>
<dbReference type="KEGG" id="sty:STY1311"/>
<dbReference type="PATRIC" id="fig|220341.7.peg.1317"/>
<dbReference type="eggNOG" id="COG3099">
    <property type="taxonomic scope" value="Bacteria"/>
</dbReference>
<dbReference type="HOGENOM" id="CLU_143392_0_0_6"/>
<dbReference type="OMA" id="SEDWQEH"/>
<dbReference type="OrthoDB" id="5677388at2"/>
<dbReference type="Proteomes" id="UP000000541">
    <property type="component" value="Chromosome"/>
</dbReference>
<dbReference type="Proteomes" id="UP000002670">
    <property type="component" value="Chromosome"/>
</dbReference>
<dbReference type="Gene3D" id="3.10.450.140">
    <property type="entry name" value="dsDNA mimic, putative"/>
    <property type="match status" value="1"/>
</dbReference>
<dbReference type="HAMAP" id="MF_00680">
    <property type="entry name" value="Put_dsDNA_mimic"/>
    <property type="match status" value="1"/>
</dbReference>
<dbReference type="InterPro" id="IPR007376">
    <property type="entry name" value="dsDNA_mimic_put"/>
</dbReference>
<dbReference type="InterPro" id="IPR036763">
    <property type="entry name" value="Put_dsDNA_mimic_sf"/>
</dbReference>
<dbReference type="NCBIfam" id="NF003469">
    <property type="entry name" value="PRK05094.1"/>
    <property type="match status" value="1"/>
</dbReference>
<dbReference type="Pfam" id="PF04269">
    <property type="entry name" value="DUF440"/>
    <property type="match status" value="1"/>
</dbReference>
<dbReference type="PIRSF" id="PIRSF004916">
    <property type="entry name" value="UCP004916"/>
    <property type="match status" value="1"/>
</dbReference>
<dbReference type="SUPFAM" id="SSF102816">
    <property type="entry name" value="Putative dsDNA mimic"/>
    <property type="match status" value="1"/>
</dbReference>
<name>YCIU_SALTI</name>
<accession>Q8Z7E5</accession>
<protein>
    <recommendedName>
        <fullName evidence="1">Putative double-stranded DNA mimic protein YciU</fullName>
    </recommendedName>
</protein>
<feature type="chain" id="PRO_0000072782" description="Putative double-stranded DNA mimic protein YciU">
    <location>
        <begin position="1"/>
        <end position="109"/>
    </location>
</feature>